<comment type="catalytic activity">
    <reaction evidence="1">
        <text>tRNA(Lys) + L-lysine + ATP = L-lysyl-tRNA(Lys) + AMP + diphosphate</text>
        <dbReference type="Rhea" id="RHEA:20792"/>
        <dbReference type="Rhea" id="RHEA-COMP:9696"/>
        <dbReference type="Rhea" id="RHEA-COMP:9697"/>
        <dbReference type="ChEBI" id="CHEBI:30616"/>
        <dbReference type="ChEBI" id="CHEBI:32551"/>
        <dbReference type="ChEBI" id="CHEBI:33019"/>
        <dbReference type="ChEBI" id="CHEBI:78442"/>
        <dbReference type="ChEBI" id="CHEBI:78529"/>
        <dbReference type="ChEBI" id="CHEBI:456215"/>
        <dbReference type="EC" id="6.1.1.6"/>
    </reaction>
</comment>
<comment type="cofactor">
    <cofactor evidence="1">
        <name>Mg(2+)</name>
        <dbReference type="ChEBI" id="CHEBI:18420"/>
    </cofactor>
    <text evidence="1">Binds 3 Mg(2+) ions per subunit.</text>
</comment>
<comment type="subunit">
    <text evidence="1">Homodimer.</text>
</comment>
<comment type="subcellular location">
    <subcellularLocation>
        <location evidence="1">Cytoplasm</location>
    </subcellularLocation>
</comment>
<comment type="similarity">
    <text evidence="1">Belongs to the class-II aminoacyl-tRNA synthetase family.</text>
</comment>
<protein>
    <recommendedName>
        <fullName evidence="1">Lysine--tRNA ligase</fullName>
        <ecNumber evidence="1">6.1.1.6</ecNumber>
    </recommendedName>
    <alternativeName>
        <fullName evidence="1">Lysyl-tRNA synthetase</fullName>
        <shortName evidence="1">LysRS</shortName>
    </alternativeName>
</protein>
<accession>A9MRI4</accession>
<name>SYK_SALAR</name>
<sequence>MSEQNAQGADEVVDLNNEMKARREKLAALREQGIPFPNDFRRDRTSDQLHAEFDAKEAEELEALNIEVSVAGRMMTRRIMGKASFVTLQDVGGRIQLYVARDDLPEGVYNEQFKKWDLGDILGAKGKLFKTKTGELSIHCSELRLLTKALRPLPDKFHGLQDQEARYRQRYLDLISNDESRNTFKTRSKILAGIRQFMVARGFMEVETPMMQVIPGGASARPFITHHNALDLDMYLRIAPELYLKRLVVGGFERVFEINRNFRNEGISVRHNPEFTMMELYMAYADYKDLIELTESLFRTLAQDVLGNTQVPYGDEVFDFGKPFEKLTMREAIKKYRPETDMADLDNFDSAKAIAESIGIHVEKSWGLGRIVTEIFDEVAEAHLIQPTFITEYPAEVSPLARRNDVNPEITDRFEFFIGGREIGNGFSELNDAEDQAQRFQDQVNAKAAGDDEAMFYDEDYVTALEHGLPPTAGLGIGIDRMVMLFTNSHTIRDVILFPAMRPVK</sequence>
<feature type="chain" id="PRO_1000078507" description="Lysine--tRNA ligase">
    <location>
        <begin position="1"/>
        <end position="505"/>
    </location>
</feature>
<feature type="binding site" evidence="1">
    <location>
        <position position="415"/>
    </location>
    <ligand>
        <name>Mg(2+)</name>
        <dbReference type="ChEBI" id="CHEBI:18420"/>
        <label>1</label>
    </ligand>
</feature>
<feature type="binding site" evidence="1">
    <location>
        <position position="422"/>
    </location>
    <ligand>
        <name>Mg(2+)</name>
        <dbReference type="ChEBI" id="CHEBI:18420"/>
        <label>1</label>
    </ligand>
</feature>
<feature type="binding site" evidence="1">
    <location>
        <position position="422"/>
    </location>
    <ligand>
        <name>Mg(2+)</name>
        <dbReference type="ChEBI" id="CHEBI:18420"/>
        <label>2</label>
    </ligand>
</feature>
<reference key="1">
    <citation type="submission" date="2007-11" db="EMBL/GenBank/DDBJ databases">
        <authorList>
            <consortium name="The Salmonella enterica serovar Arizonae Genome Sequencing Project"/>
            <person name="McClelland M."/>
            <person name="Sanderson E.K."/>
            <person name="Porwollik S."/>
            <person name="Spieth J."/>
            <person name="Clifton W.S."/>
            <person name="Fulton R."/>
            <person name="Chunyan W."/>
            <person name="Wollam A."/>
            <person name="Shah N."/>
            <person name="Pepin K."/>
            <person name="Bhonagiri V."/>
            <person name="Nash W."/>
            <person name="Johnson M."/>
            <person name="Thiruvilangam P."/>
            <person name="Wilson R."/>
        </authorList>
    </citation>
    <scope>NUCLEOTIDE SEQUENCE [LARGE SCALE GENOMIC DNA]</scope>
    <source>
        <strain>ATCC BAA-731 / CDC346-86 / RSK2980</strain>
    </source>
</reference>
<keyword id="KW-0030">Aminoacyl-tRNA synthetase</keyword>
<keyword id="KW-0067">ATP-binding</keyword>
<keyword id="KW-0963">Cytoplasm</keyword>
<keyword id="KW-0436">Ligase</keyword>
<keyword id="KW-0460">Magnesium</keyword>
<keyword id="KW-0479">Metal-binding</keyword>
<keyword id="KW-0547">Nucleotide-binding</keyword>
<keyword id="KW-0648">Protein biosynthesis</keyword>
<keyword id="KW-1185">Reference proteome</keyword>
<organism>
    <name type="scientific">Salmonella arizonae (strain ATCC BAA-731 / CDC346-86 / RSK2980)</name>
    <dbReference type="NCBI Taxonomy" id="41514"/>
    <lineage>
        <taxon>Bacteria</taxon>
        <taxon>Pseudomonadati</taxon>
        <taxon>Pseudomonadota</taxon>
        <taxon>Gammaproteobacteria</taxon>
        <taxon>Enterobacterales</taxon>
        <taxon>Enterobacteriaceae</taxon>
        <taxon>Salmonella</taxon>
    </lineage>
</organism>
<gene>
    <name evidence="1" type="primary">lysS</name>
    <name type="ordered locus">SARI_04610</name>
</gene>
<evidence type="ECO:0000255" key="1">
    <source>
        <dbReference type="HAMAP-Rule" id="MF_00252"/>
    </source>
</evidence>
<proteinExistence type="inferred from homology"/>
<dbReference type="EC" id="6.1.1.6" evidence="1"/>
<dbReference type="EMBL" id="CP000880">
    <property type="protein sequence ID" value="ABX24382.1"/>
    <property type="molecule type" value="Genomic_DNA"/>
</dbReference>
<dbReference type="SMR" id="A9MRI4"/>
<dbReference type="STRING" id="41514.SARI_04610"/>
<dbReference type="KEGG" id="ses:SARI_04610"/>
<dbReference type="HOGENOM" id="CLU_008255_6_0_6"/>
<dbReference type="Proteomes" id="UP000002084">
    <property type="component" value="Chromosome"/>
</dbReference>
<dbReference type="GO" id="GO:0005829">
    <property type="term" value="C:cytosol"/>
    <property type="evidence" value="ECO:0007669"/>
    <property type="project" value="TreeGrafter"/>
</dbReference>
<dbReference type="GO" id="GO:0005524">
    <property type="term" value="F:ATP binding"/>
    <property type="evidence" value="ECO:0007669"/>
    <property type="project" value="UniProtKB-UniRule"/>
</dbReference>
<dbReference type="GO" id="GO:0004824">
    <property type="term" value="F:lysine-tRNA ligase activity"/>
    <property type="evidence" value="ECO:0007669"/>
    <property type="project" value="UniProtKB-UniRule"/>
</dbReference>
<dbReference type="GO" id="GO:0000287">
    <property type="term" value="F:magnesium ion binding"/>
    <property type="evidence" value="ECO:0007669"/>
    <property type="project" value="UniProtKB-UniRule"/>
</dbReference>
<dbReference type="GO" id="GO:0000049">
    <property type="term" value="F:tRNA binding"/>
    <property type="evidence" value="ECO:0007669"/>
    <property type="project" value="TreeGrafter"/>
</dbReference>
<dbReference type="GO" id="GO:0006430">
    <property type="term" value="P:lysyl-tRNA aminoacylation"/>
    <property type="evidence" value="ECO:0007669"/>
    <property type="project" value="UniProtKB-UniRule"/>
</dbReference>
<dbReference type="CDD" id="cd00775">
    <property type="entry name" value="LysRS_core"/>
    <property type="match status" value="1"/>
</dbReference>
<dbReference type="CDD" id="cd04322">
    <property type="entry name" value="LysRS_N"/>
    <property type="match status" value="1"/>
</dbReference>
<dbReference type="FunFam" id="2.40.50.140:FF:000024">
    <property type="entry name" value="Lysine--tRNA ligase"/>
    <property type="match status" value="1"/>
</dbReference>
<dbReference type="FunFam" id="3.30.930.10:FF:000001">
    <property type="entry name" value="Lysine--tRNA ligase"/>
    <property type="match status" value="1"/>
</dbReference>
<dbReference type="Gene3D" id="3.30.930.10">
    <property type="entry name" value="Bira Bifunctional Protein, Domain 2"/>
    <property type="match status" value="1"/>
</dbReference>
<dbReference type="Gene3D" id="2.40.50.140">
    <property type="entry name" value="Nucleic acid-binding proteins"/>
    <property type="match status" value="1"/>
</dbReference>
<dbReference type="HAMAP" id="MF_00252">
    <property type="entry name" value="Lys_tRNA_synth_class2"/>
    <property type="match status" value="1"/>
</dbReference>
<dbReference type="InterPro" id="IPR004364">
    <property type="entry name" value="Aa-tRNA-synt_II"/>
</dbReference>
<dbReference type="InterPro" id="IPR006195">
    <property type="entry name" value="aa-tRNA-synth_II"/>
</dbReference>
<dbReference type="InterPro" id="IPR045864">
    <property type="entry name" value="aa-tRNA-synth_II/BPL/LPL"/>
</dbReference>
<dbReference type="InterPro" id="IPR002313">
    <property type="entry name" value="Lys-tRNA-ligase_II"/>
</dbReference>
<dbReference type="InterPro" id="IPR034762">
    <property type="entry name" value="Lys-tRNA-ligase_II_bac/euk"/>
</dbReference>
<dbReference type="InterPro" id="IPR044136">
    <property type="entry name" value="Lys-tRNA-ligase_II_N"/>
</dbReference>
<dbReference type="InterPro" id="IPR018149">
    <property type="entry name" value="Lys-tRNA-synth_II_C"/>
</dbReference>
<dbReference type="InterPro" id="IPR012340">
    <property type="entry name" value="NA-bd_OB-fold"/>
</dbReference>
<dbReference type="InterPro" id="IPR004365">
    <property type="entry name" value="NA-bd_OB_tRNA"/>
</dbReference>
<dbReference type="NCBIfam" id="TIGR00499">
    <property type="entry name" value="lysS_bact"/>
    <property type="match status" value="1"/>
</dbReference>
<dbReference type="NCBIfam" id="NF001756">
    <property type="entry name" value="PRK00484.1"/>
    <property type="match status" value="1"/>
</dbReference>
<dbReference type="NCBIfam" id="NF009101">
    <property type="entry name" value="PRK12445.1"/>
    <property type="match status" value="1"/>
</dbReference>
<dbReference type="PANTHER" id="PTHR42918:SF15">
    <property type="entry name" value="LYSINE--TRNA LIGASE, CHLOROPLASTIC_MITOCHONDRIAL"/>
    <property type="match status" value="1"/>
</dbReference>
<dbReference type="PANTHER" id="PTHR42918">
    <property type="entry name" value="LYSYL-TRNA SYNTHETASE"/>
    <property type="match status" value="1"/>
</dbReference>
<dbReference type="Pfam" id="PF00152">
    <property type="entry name" value="tRNA-synt_2"/>
    <property type="match status" value="1"/>
</dbReference>
<dbReference type="Pfam" id="PF01336">
    <property type="entry name" value="tRNA_anti-codon"/>
    <property type="match status" value="1"/>
</dbReference>
<dbReference type="PIRSF" id="PIRSF039101">
    <property type="entry name" value="LysRS2"/>
    <property type="match status" value="1"/>
</dbReference>
<dbReference type="PRINTS" id="PR00982">
    <property type="entry name" value="TRNASYNTHLYS"/>
</dbReference>
<dbReference type="SUPFAM" id="SSF55681">
    <property type="entry name" value="Class II aaRS and biotin synthetases"/>
    <property type="match status" value="1"/>
</dbReference>
<dbReference type="SUPFAM" id="SSF50249">
    <property type="entry name" value="Nucleic acid-binding proteins"/>
    <property type="match status" value="1"/>
</dbReference>
<dbReference type="PROSITE" id="PS50862">
    <property type="entry name" value="AA_TRNA_LIGASE_II"/>
    <property type="match status" value="1"/>
</dbReference>